<sequence>MIQTASTISSNGGTNQGMESSSANSPEMNGTQNSMSVGMSGSGSSQNRKITQFSNKLYNMVNDSSTDSLIRWSDRGDSFLVIGHEDFAKLVLPRYFKHNNFSSFVRQLNMYGFHKVPHIQQGVLQSDSPNELLEFANPNFQRDQPELLCLVTRKKAGSQPVEESNTSLDMSTISSELQNIRIQQMNLSNELSRIQVDNAALWQENMENRERQRRHQETIDKILRFLASVYLDGKQKPPSKVMPKSRRLLLEAKYPTVSPTNEPSAHSRPSPQGTTANSSSASISSLHNTTPDGEGKYRSVQNGRALNYVSSFNSDSHSPKDYISQSYTNEPGLKKESADSFNNSIDSYISPNQSPNTDVPSLNRDDTTDPKVVNTGDIINMLDDANSIEGSNMNSLSPLLFDYPNSLYPVNNTSSEQHHNSYRGSVSNSQPSGNLSESTNLQPVQPVDYMSNSNPSYGSYNAEDQLTNFHPGYAMDQKRISKLSDGITKQDQNIQALADILGIPLGDGKIDDAGFSANSPTNLNLPVSSDLDSVLNIPPNEDVFPDSNPVFDEFTNISNLTSPIEASNGNTFGSNPVSLPNQQKSVNPSLMTVSSPRQVRKKRKSSIGA</sequence>
<proteinExistence type="evidence at protein level"/>
<name>HSF_SCHPO</name>
<comment type="function">
    <text>DNA-binding protein that specifically binds heat shock promoter elements (HSE) and activates transcription. Also required for growth at normal temperatures.</text>
</comment>
<comment type="subunit">
    <text>Homotrimer.</text>
</comment>
<comment type="subcellular location">
    <subcellularLocation>
        <location evidence="3 4">Nucleus</location>
    </subcellularLocation>
</comment>
<comment type="similarity">
    <text evidence="6">Belongs to the HSF family.</text>
</comment>
<accession>Q02953</accession>
<accession>Q9USC6</accession>
<dbReference type="EMBL" id="M94683">
    <property type="protein sequence ID" value="AAA35313.1"/>
    <property type="molecule type" value="mRNA"/>
</dbReference>
<dbReference type="EMBL" id="CU329670">
    <property type="protein sequence ID" value="CAA93546.1"/>
    <property type="molecule type" value="Genomic_DNA"/>
</dbReference>
<dbReference type="EMBL" id="AB027865">
    <property type="protein sequence ID" value="BAA87169.1"/>
    <property type="molecule type" value="Genomic_DNA"/>
</dbReference>
<dbReference type="PIR" id="A48070">
    <property type="entry name" value="A48070"/>
</dbReference>
<dbReference type="RefSeq" id="NP_594846.1">
    <property type="nucleotide sequence ID" value="NM_001020275.2"/>
</dbReference>
<dbReference type="SMR" id="Q02953"/>
<dbReference type="BioGRID" id="278378">
    <property type="interactions" value="6"/>
</dbReference>
<dbReference type="FunCoup" id="Q02953">
    <property type="interactions" value="343"/>
</dbReference>
<dbReference type="STRING" id="284812.Q02953"/>
<dbReference type="iPTMnet" id="Q02953"/>
<dbReference type="PaxDb" id="4896-SPAC2E12.02.1"/>
<dbReference type="EnsemblFungi" id="SPAC2E12.02.1">
    <property type="protein sequence ID" value="SPAC2E12.02.1:pep"/>
    <property type="gene ID" value="SPAC2E12.02"/>
</dbReference>
<dbReference type="GeneID" id="2541888"/>
<dbReference type="KEGG" id="spo:2541888"/>
<dbReference type="PomBase" id="SPAC2E12.02">
    <property type="gene designation" value="hsf1"/>
</dbReference>
<dbReference type="VEuPathDB" id="FungiDB:SPAC2E12.02"/>
<dbReference type="eggNOG" id="KOG0627">
    <property type="taxonomic scope" value="Eukaryota"/>
</dbReference>
<dbReference type="HOGENOM" id="CLU_443554_0_0_1"/>
<dbReference type="InParanoid" id="Q02953"/>
<dbReference type="OMA" id="FANPNFQ"/>
<dbReference type="PhylomeDB" id="Q02953"/>
<dbReference type="Reactome" id="R-SPO-3371453">
    <property type="pathway name" value="Regulation of HSF1-mediated heat shock response"/>
</dbReference>
<dbReference type="Reactome" id="R-SPO-3371511">
    <property type="pathway name" value="HSF1 activation"/>
</dbReference>
<dbReference type="Reactome" id="R-SPO-3371568">
    <property type="pathway name" value="Attenuation phase"/>
</dbReference>
<dbReference type="Reactome" id="R-SPO-3371571">
    <property type="pathway name" value="HSF1-dependent transactivation"/>
</dbReference>
<dbReference type="Reactome" id="R-SPO-9841251">
    <property type="pathway name" value="Mitochondrial unfolded protein response (UPRmt)"/>
</dbReference>
<dbReference type="PRO" id="PR:Q02953"/>
<dbReference type="Proteomes" id="UP000002485">
    <property type="component" value="Chromosome I"/>
</dbReference>
<dbReference type="GO" id="GO:0000785">
    <property type="term" value="C:chromatin"/>
    <property type="evidence" value="ECO:0000314"/>
    <property type="project" value="PomBase"/>
</dbReference>
<dbReference type="GO" id="GO:0005737">
    <property type="term" value="C:cytoplasm"/>
    <property type="evidence" value="ECO:0000314"/>
    <property type="project" value="PomBase"/>
</dbReference>
<dbReference type="GO" id="GO:0005829">
    <property type="term" value="C:cytosol"/>
    <property type="evidence" value="ECO:0007005"/>
    <property type="project" value="PomBase"/>
</dbReference>
<dbReference type="GO" id="GO:0005634">
    <property type="term" value="C:nucleus"/>
    <property type="evidence" value="ECO:0000314"/>
    <property type="project" value="PomBase"/>
</dbReference>
<dbReference type="GO" id="GO:0001228">
    <property type="term" value="F:DNA-binding transcription activator activity, RNA polymerase II-specific"/>
    <property type="evidence" value="ECO:0000315"/>
    <property type="project" value="PomBase"/>
</dbReference>
<dbReference type="GO" id="GO:0000981">
    <property type="term" value="F:DNA-binding transcription factor activity, RNA polymerase II-specific"/>
    <property type="evidence" value="ECO:0000314"/>
    <property type="project" value="PomBase"/>
</dbReference>
<dbReference type="GO" id="GO:0000978">
    <property type="term" value="F:RNA polymerase II cis-regulatory region sequence-specific DNA binding"/>
    <property type="evidence" value="ECO:0000314"/>
    <property type="project" value="PomBase"/>
</dbReference>
<dbReference type="GO" id="GO:0034605">
    <property type="term" value="P:cellular response to heat"/>
    <property type="evidence" value="ECO:0000315"/>
    <property type="project" value="PomBase"/>
</dbReference>
<dbReference type="GO" id="GO:0045944">
    <property type="term" value="P:positive regulation of transcription by RNA polymerase II"/>
    <property type="evidence" value="ECO:0000314"/>
    <property type="project" value="PomBase"/>
</dbReference>
<dbReference type="FunFam" id="1.10.10.10:FF:000027">
    <property type="entry name" value="Heat shock transcription factor 1"/>
    <property type="match status" value="1"/>
</dbReference>
<dbReference type="Gene3D" id="1.10.10.10">
    <property type="entry name" value="Winged helix-like DNA-binding domain superfamily/Winged helix DNA-binding domain"/>
    <property type="match status" value="1"/>
</dbReference>
<dbReference type="InterPro" id="IPR000232">
    <property type="entry name" value="HSF_DNA-bd"/>
</dbReference>
<dbReference type="InterPro" id="IPR036388">
    <property type="entry name" value="WH-like_DNA-bd_sf"/>
</dbReference>
<dbReference type="InterPro" id="IPR036390">
    <property type="entry name" value="WH_DNA-bd_sf"/>
</dbReference>
<dbReference type="PANTHER" id="PTHR10015:SF427">
    <property type="entry name" value="HEAT SHOCK FACTOR PROTEIN"/>
    <property type="match status" value="1"/>
</dbReference>
<dbReference type="PANTHER" id="PTHR10015">
    <property type="entry name" value="HEAT SHOCK TRANSCRIPTION FACTOR"/>
    <property type="match status" value="1"/>
</dbReference>
<dbReference type="Pfam" id="PF00447">
    <property type="entry name" value="HSF_DNA-bind"/>
    <property type="match status" value="1"/>
</dbReference>
<dbReference type="PRINTS" id="PR00056">
    <property type="entry name" value="HSFDOMAIN"/>
</dbReference>
<dbReference type="SMART" id="SM00415">
    <property type="entry name" value="HSF"/>
    <property type="match status" value="1"/>
</dbReference>
<dbReference type="SUPFAM" id="SSF46785">
    <property type="entry name" value="Winged helix' DNA-binding domain"/>
    <property type="match status" value="1"/>
</dbReference>
<dbReference type="PROSITE" id="PS00434">
    <property type="entry name" value="HSF_DOMAIN"/>
    <property type="match status" value="1"/>
</dbReference>
<reference key="1">
    <citation type="journal article" date="1993" name="Mol. Cell. Biol.">
        <title>Heat shock factor is required for growth at normal temperatures in the fission yeast Schizosaccharomyces pombe.</title>
        <authorList>
            <person name="Gallo G.J."/>
            <person name="Prentice H."/>
            <person name="Kingston R.E."/>
        </authorList>
    </citation>
    <scope>NUCLEOTIDE SEQUENCE [MRNA]</scope>
</reference>
<reference key="2">
    <citation type="journal article" date="2002" name="Nature">
        <title>The genome sequence of Schizosaccharomyces pombe.</title>
        <authorList>
            <person name="Wood V."/>
            <person name="Gwilliam R."/>
            <person name="Rajandream M.A."/>
            <person name="Lyne M.H."/>
            <person name="Lyne R."/>
            <person name="Stewart A."/>
            <person name="Sgouros J.G."/>
            <person name="Peat N."/>
            <person name="Hayles J."/>
            <person name="Baker S.G."/>
            <person name="Basham D."/>
            <person name="Bowman S."/>
            <person name="Brooks K."/>
            <person name="Brown D."/>
            <person name="Brown S."/>
            <person name="Chillingworth T."/>
            <person name="Churcher C.M."/>
            <person name="Collins M."/>
            <person name="Connor R."/>
            <person name="Cronin A."/>
            <person name="Davis P."/>
            <person name="Feltwell T."/>
            <person name="Fraser A."/>
            <person name="Gentles S."/>
            <person name="Goble A."/>
            <person name="Hamlin N."/>
            <person name="Harris D.E."/>
            <person name="Hidalgo J."/>
            <person name="Hodgson G."/>
            <person name="Holroyd S."/>
            <person name="Hornsby T."/>
            <person name="Howarth S."/>
            <person name="Huckle E.J."/>
            <person name="Hunt S."/>
            <person name="Jagels K."/>
            <person name="James K.D."/>
            <person name="Jones L."/>
            <person name="Jones M."/>
            <person name="Leather S."/>
            <person name="McDonald S."/>
            <person name="McLean J."/>
            <person name="Mooney P."/>
            <person name="Moule S."/>
            <person name="Mungall K.L."/>
            <person name="Murphy L.D."/>
            <person name="Niblett D."/>
            <person name="Odell C."/>
            <person name="Oliver K."/>
            <person name="O'Neil S."/>
            <person name="Pearson D."/>
            <person name="Quail M.A."/>
            <person name="Rabbinowitsch E."/>
            <person name="Rutherford K.M."/>
            <person name="Rutter S."/>
            <person name="Saunders D."/>
            <person name="Seeger K."/>
            <person name="Sharp S."/>
            <person name="Skelton J."/>
            <person name="Simmonds M.N."/>
            <person name="Squares R."/>
            <person name="Squares S."/>
            <person name="Stevens K."/>
            <person name="Taylor K."/>
            <person name="Taylor R.G."/>
            <person name="Tivey A."/>
            <person name="Walsh S.V."/>
            <person name="Warren T."/>
            <person name="Whitehead S."/>
            <person name="Woodward J.R."/>
            <person name="Volckaert G."/>
            <person name="Aert R."/>
            <person name="Robben J."/>
            <person name="Grymonprez B."/>
            <person name="Weltjens I."/>
            <person name="Vanstreels E."/>
            <person name="Rieger M."/>
            <person name="Schaefer M."/>
            <person name="Mueller-Auer S."/>
            <person name="Gabel C."/>
            <person name="Fuchs M."/>
            <person name="Duesterhoeft A."/>
            <person name="Fritzc C."/>
            <person name="Holzer E."/>
            <person name="Moestl D."/>
            <person name="Hilbert H."/>
            <person name="Borzym K."/>
            <person name="Langer I."/>
            <person name="Beck A."/>
            <person name="Lehrach H."/>
            <person name="Reinhardt R."/>
            <person name="Pohl T.M."/>
            <person name="Eger P."/>
            <person name="Zimmermann W."/>
            <person name="Wedler H."/>
            <person name="Wambutt R."/>
            <person name="Purnelle B."/>
            <person name="Goffeau A."/>
            <person name="Cadieu E."/>
            <person name="Dreano S."/>
            <person name="Gloux S."/>
            <person name="Lelaure V."/>
            <person name="Mottier S."/>
            <person name="Galibert F."/>
            <person name="Aves S.J."/>
            <person name="Xiang Z."/>
            <person name="Hunt C."/>
            <person name="Moore K."/>
            <person name="Hurst S.M."/>
            <person name="Lucas M."/>
            <person name="Rochet M."/>
            <person name="Gaillardin C."/>
            <person name="Tallada V.A."/>
            <person name="Garzon A."/>
            <person name="Thode G."/>
            <person name="Daga R.R."/>
            <person name="Cruzado L."/>
            <person name="Jimenez J."/>
            <person name="Sanchez M."/>
            <person name="del Rey F."/>
            <person name="Benito J."/>
            <person name="Dominguez A."/>
            <person name="Revuelta J.L."/>
            <person name="Moreno S."/>
            <person name="Armstrong J."/>
            <person name="Forsburg S.L."/>
            <person name="Cerutti L."/>
            <person name="Lowe T."/>
            <person name="McCombie W.R."/>
            <person name="Paulsen I."/>
            <person name="Potashkin J."/>
            <person name="Shpakovski G.V."/>
            <person name="Ussery D."/>
            <person name="Barrell B.G."/>
            <person name="Nurse P."/>
        </authorList>
    </citation>
    <scope>NUCLEOTIDE SEQUENCE [LARGE SCALE GENOMIC DNA]</scope>
    <source>
        <strain>972 / ATCC 24843</strain>
    </source>
</reference>
<reference key="3">
    <citation type="journal article" date="2000" name="Genes Cells">
        <title>Large-scale screening of intracellular protein localization in living fission yeast cells by the use of a GFP-fusion genomic DNA library.</title>
        <authorList>
            <person name="Ding D.-Q."/>
            <person name="Tomita Y."/>
            <person name="Yamamoto A."/>
            <person name="Chikashige Y."/>
            <person name="Haraguchi T."/>
            <person name="Hiraoka Y."/>
        </authorList>
    </citation>
    <scope>NUCLEOTIDE SEQUENCE [LARGE SCALE GENOMIC DNA] OF 111-222</scope>
    <scope>SUBCELLULAR LOCATION</scope>
    <source>
        <strain>ATCC 38364 / 968</strain>
    </source>
</reference>
<reference key="4">
    <citation type="journal article" date="2006" name="Nat. Biotechnol.">
        <title>ORFeome cloning and global analysis of protein localization in the fission yeast Schizosaccharomyces pombe.</title>
        <authorList>
            <person name="Matsuyama A."/>
            <person name="Arai R."/>
            <person name="Yashiroda Y."/>
            <person name="Shirai A."/>
            <person name="Kamata A."/>
            <person name="Sekido S."/>
            <person name="Kobayashi Y."/>
            <person name="Hashimoto A."/>
            <person name="Hamamoto M."/>
            <person name="Hiraoka Y."/>
            <person name="Horinouchi S."/>
            <person name="Yoshida M."/>
        </authorList>
    </citation>
    <scope>SUBCELLULAR LOCATION [LARGE SCALE ANALYSIS]</scope>
</reference>
<reference key="5">
    <citation type="journal article" date="2008" name="J. Proteome Res.">
        <title>Phosphoproteome analysis of fission yeast.</title>
        <authorList>
            <person name="Wilson-Grady J.T."/>
            <person name="Villen J."/>
            <person name="Gygi S.P."/>
        </authorList>
    </citation>
    <scope>PHOSPHORYLATION [LARGE SCALE ANALYSIS] AT SER-350</scope>
    <scope>IDENTIFICATION BY MASS SPECTROMETRY</scope>
</reference>
<evidence type="ECO:0000250" key="1"/>
<evidence type="ECO:0000256" key="2">
    <source>
        <dbReference type="SAM" id="MobiDB-lite"/>
    </source>
</evidence>
<evidence type="ECO:0000269" key="3">
    <source>
    </source>
</evidence>
<evidence type="ECO:0000269" key="4">
    <source>
    </source>
</evidence>
<evidence type="ECO:0000269" key="5">
    <source>
    </source>
</evidence>
<evidence type="ECO:0000305" key="6"/>
<feature type="chain" id="PRO_0000124580" description="Heat shock factor protein">
    <location>
        <begin position="1"/>
        <end position="609"/>
    </location>
</feature>
<feature type="DNA-binding region" evidence="1">
    <location>
        <begin position="50"/>
        <end position="156"/>
    </location>
</feature>
<feature type="region of interest" description="Disordered" evidence="2">
    <location>
        <begin position="1"/>
        <end position="47"/>
    </location>
</feature>
<feature type="region of interest" description="Disordered" evidence="2">
    <location>
        <begin position="255"/>
        <end position="298"/>
    </location>
</feature>
<feature type="region of interest" description="Disordered" evidence="2">
    <location>
        <begin position="310"/>
        <end position="371"/>
    </location>
</feature>
<feature type="region of interest" description="Disordered" evidence="2">
    <location>
        <begin position="411"/>
        <end position="445"/>
    </location>
</feature>
<feature type="region of interest" description="Disordered" evidence="2">
    <location>
        <begin position="567"/>
        <end position="609"/>
    </location>
</feature>
<feature type="compositionally biased region" description="Polar residues" evidence="2">
    <location>
        <begin position="1"/>
        <end position="33"/>
    </location>
</feature>
<feature type="compositionally biased region" description="Low complexity" evidence="2">
    <location>
        <begin position="34"/>
        <end position="45"/>
    </location>
</feature>
<feature type="compositionally biased region" description="Polar residues" evidence="2">
    <location>
        <begin position="257"/>
        <end position="277"/>
    </location>
</feature>
<feature type="compositionally biased region" description="Polar residues" evidence="2">
    <location>
        <begin position="339"/>
        <end position="360"/>
    </location>
</feature>
<feature type="compositionally biased region" description="Polar residues" evidence="2">
    <location>
        <begin position="422"/>
        <end position="443"/>
    </location>
</feature>
<feature type="compositionally biased region" description="Polar residues" evidence="2">
    <location>
        <begin position="567"/>
        <end position="597"/>
    </location>
</feature>
<feature type="compositionally biased region" description="Basic residues" evidence="2">
    <location>
        <begin position="598"/>
        <end position="609"/>
    </location>
</feature>
<feature type="modified residue" description="Phosphoserine" evidence="5">
    <location>
        <position position="350"/>
    </location>
</feature>
<feature type="sequence conflict" description="In Ref. 1; AAA35313." evidence="6" ref="1">
    <original>N</original>
    <variation>H</variation>
    <location>
        <position position="29"/>
    </location>
</feature>
<gene>
    <name type="primary">hsf1</name>
    <name type="synonym">hsf</name>
    <name type="ORF">SPAC2E12.02</name>
</gene>
<keyword id="KW-0010">Activator</keyword>
<keyword id="KW-0238">DNA-binding</keyword>
<keyword id="KW-0539">Nucleus</keyword>
<keyword id="KW-0597">Phosphoprotein</keyword>
<keyword id="KW-1185">Reference proteome</keyword>
<keyword id="KW-0346">Stress response</keyword>
<keyword id="KW-0804">Transcription</keyword>
<keyword id="KW-0805">Transcription regulation</keyword>
<organism>
    <name type="scientific">Schizosaccharomyces pombe (strain 972 / ATCC 24843)</name>
    <name type="common">Fission yeast</name>
    <dbReference type="NCBI Taxonomy" id="284812"/>
    <lineage>
        <taxon>Eukaryota</taxon>
        <taxon>Fungi</taxon>
        <taxon>Dikarya</taxon>
        <taxon>Ascomycota</taxon>
        <taxon>Taphrinomycotina</taxon>
        <taxon>Schizosaccharomycetes</taxon>
        <taxon>Schizosaccharomycetales</taxon>
        <taxon>Schizosaccharomycetaceae</taxon>
        <taxon>Schizosaccharomyces</taxon>
    </lineage>
</organism>
<protein>
    <recommendedName>
        <fullName>Heat shock factor protein</fullName>
        <shortName>HSF</shortName>
    </recommendedName>
    <alternativeName>
        <fullName>Heat shock transcription factor</fullName>
        <shortName>HSTF</shortName>
    </alternativeName>
</protein>